<accession>A5D632</accession>
<name>RL25_PELTS</name>
<proteinExistence type="inferred from homology"/>
<feature type="chain" id="PRO_1000142542" description="Large ribosomal subunit protein bL25">
    <location>
        <begin position="1"/>
        <end position="209"/>
    </location>
</feature>
<feature type="region of interest" description="Disordered" evidence="2">
    <location>
        <begin position="183"/>
        <end position="209"/>
    </location>
</feature>
<feature type="compositionally biased region" description="Low complexity" evidence="2">
    <location>
        <begin position="184"/>
        <end position="209"/>
    </location>
</feature>
<protein>
    <recommendedName>
        <fullName evidence="1">Large ribosomal subunit protein bL25</fullName>
    </recommendedName>
    <alternativeName>
        <fullName evidence="3">50S ribosomal protein L25</fullName>
    </alternativeName>
    <alternativeName>
        <fullName evidence="1">General stress protein CTC</fullName>
    </alternativeName>
</protein>
<comment type="function">
    <text evidence="1">This is one of the proteins that binds to the 5S RNA in the ribosome where it forms part of the central protuberance.</text>
</comment>
<comment type="subunit">
    <text evidence="1">Part of the 50S ribosomal subunit; part of the 5S rRNA/L5/L18/L25 subcomplex. Contacts the 5S rRNA. Binds to the 5S rRNA independently of L5 and L18.</text>
</comment>
<comment type="similarity">
    <text evidence="1">Belongs to the bacterial ribosomal protein bL25 family. CTC subfamily.</text>
</comment>
<organism>
    <name type="scientific">Pelotomaculum thermopropionicum (strain DSM 13744 / JCM 10971 / SI)</name>
    <dbReference type="NCBI Taxonomy" id="370438"/>
    <lineage>
        <taxon>Bacteria</taxon>
        <taxon>Bacillati</taxon>
        <taxon>Bacillota</taxon>
        <taxon>Clostridia</taxon>
        <taxon>Eubacteriales</taxon>
        <taxon>Desulfotomaculaceae</taxon>
        <taxon>Pelotomaculum</taxon>
    </lineage>
</organism>
<reference key="1">
    <citation type="journal article" date="2008" name="Genome Res.">
        <title>The genome of Pelotomaculum thermopropionicum reveals niche-associated evolution in anaerobic microbiota.</title>
        <authorList>
            <person name="Kosaka T."/>
            <person name="Kato S."/>
            <person name="Shimoyama T."/>
            <person name="Ishii S."/>
            <person name="Abe T."/>
            <person name="Watanabe K."/>
        </authorList>
    </citation>
    <scope>NUCLEOTIDE SEQUENCE [LARGE SCALE GENOMIC DNA]</scope>
    <source>
        <strain>DSM 13744 / JCM 10971 / SI</strain>
    </source>
</reference>
<sequence length="209" mass="22102">MTAELEAQARTEKTRSFTHSLREKGMIPAVVYGKNVGSLSIAVDAGELQKILEGAGSNALIRMKIKENGKIRKHNVLVKEVQRDPVRRELIHADFHQVSLKDRVHATVPVHLTGSAAGTVEGGVLTPLLRRVEMECLASEIPEAITVDVSGLRIGDTITVADLPLPPGVRALEDPEAPVVTVTAGERPAAEPAAAPGAAPAAGPEEAEE</sequence>
<dbReference type="EMBL" id="AP009389">
    <property type="protein sequence ID" value="BAF58293.1"/>
    <property type="molecule type" value="Genomic_DNA"/>
</dbReference>
<dbReference type="SMR" id="A5D632"/>
<dbReference type="STRING" id="370438.PTH_0112"/>
<dbReference type="KEGG" id="pth:PTH_0112"/>
<dbReference type="eggNOG" id="COG1825">
    <property type="taxonomic scope" value="Bacteria"/>
</dbReference>
<dbReference type="HOGENOM" id="CLU_075939_2_0_9"/>
<dbReference type="Proteomes" id="UP000006556">
    <property type="component" value="Chromosome"/>
</dbReference>
<dbReference type="GO" id="GO:0022625">
    <property type="term" value="C:cytosolic large ribosomal subunit"/>
    <property type="evidence" value="ECO:0007669"/>
    <property type="project" value="TreeGrafter"/>
</dbReference>
<dbReference type="GO" id="GO:0008097">
    <property type="term" value="F:5S rRNA binding"/>
    <property type="evidence" value="ECO:0007669"/>
    <property type="project" value="InterPro"/>
</dbReference>
<dbReference type="GO" id="GO:0003735">
    <property type="term" value="F:structural constituent of ribosome"/>
    <property type="evidence" value="ECO:0007669"/>
    <property type="project" value="InterPro"/>
</dbReference>
<dbReference type="GO" id="GO:0006412">
    <property type="term" value="P:translation"/>
    <property type="evidence" value="ECO:0007669"/>
    <property type="project" value="UniProtKB-UniRule"/>
</dbReference>
<dbReference type="CDD" id="cd00495">
    <property type="entry name" value="Ribosomal_L25_TL5_CTC"/>
    <property type="match status" value="1"/>
</dbReference>
<dbReference type="Gene3D" id="2.170.120.20">
    <property type="entry name" value="Ribosomal protein L25, beta domain"/>
    <property type="match status" value="1"/>
</dbReference>
<dbReference type="Gene3D" id="2.40.240.10">
    <property type="entry name" value="Ribosomal Protein L25, Chain P"/>
    <property type="match status" value="1"/>
</dbReference>
<dbReference type="HAMAP" id="MF_01334">
    <property type="entry name" value="Ribosomal_bL25_CTC"/>
    <property type="match status" value="1"/>
</dbReference>
<dbReference type="InterPro" id="IPR020056">
    <property type="entry name" value="Rbsml_bL25/Gln-tRNA_synth_N"/>
</dbReference>
<dbReference type="InterPro" id="IPR011035">
    <property type="entry name" value="Ribosomal_bL25/Gln-tRNA_synth"/>
</dbReference>
<dbReference type="InterPro" id="IPR020057">
    <property type="entry name" value="Ribosomal_bL25_b-dom"/>
</dbReference>
<dbReference type="InterPro" id="IPR037121">
    <property type="entry name" value="Ribosomal_bL25_C"/>
</dbReference>
<dbReference type="InterPro" id="IPR001021">
    <property type="entry name" value="Ribosomal_bL25_long"/>
</dbReference>
<dbReference type="InterPro" id="IPR029751">
    <property type="entry name" value="Ribosomal_L25_dom"/>
</dbReference>
<dbReference type="InterPro" id="IPR020930">
    <property type="entry name" value="Ribosomal_uL5_bac-type"/>
</dbReference>
<dbReference type="NCBIfam" id="TIGR00731">
    <property type="entry name" value="bL25_bact_ctc"/>
    <property type="match status" value="1"/>
</dbReference>
<dbReference type="NCBIfam" id="NF004133">
    <property type="entry name" value="PRK05618.2-4"/>
    <property type="match status" value="1"/>
</dbReference>
<dbReference type="PANTHER" id="PTHR33284">
    <property type="entry name" value="RIBOSOMAL PROTEIN L25/GLN-TRNA SYNTHETASE, ANTI-CODON-BINDING DOMAIN-CONTAINING PROTEIN"/>
    <property type="match status" value="1"/>
</dbReference>
<dbReference type="PANTHER" id="PTHR33284:SF1">
    <property type="entry name" value="RIBOSOMAL PROTEIN L25_GLN-TRNA SYNTHETASE, ANTI-CODON-BINDING DOMAIN-CONTAINING PROTEIN"/>
    <property type="match status" value="1"/>
</dbReference>
<dbReference type="Pfam" id="PF01386">
    <property type="entry name" value="Ribosomal_L25p"/>
    <property type="match status" value="1"/>
</dbReference>
<dbReference type="Pfam" id="PF14693">
    <property type="entry name" value="Ribosomal_TL5_C"/>
    <property type="match status" value="1"/>
</dbReference>
<dbReference type="SUPFAM" id="SSF50715">
    <property type="entry name" value="Ribosomal protein L25-like"/>
    <property type="match status" value="1"/>
</dbReference>
<evidence type="ECO:0000255" key="1">
    <source>
        <dbReference type="HAMAP-Rule" id="MF_01334"/>
    </source>
</evidence>
<evidence type="ECO:0000256" key="2">
    <source>
        <dbReference type="SAM" id="MobiDB-lite"/>
    </source>
</evidence>
<evidence type="ECO:0000305" key="3"/>
<keyword id="KW-1185">Reference proteome</keyword>
<keyword id="KW-0687">Ribonucleoprotein</keyword>
<keyword id="KW-0689">Ribosomal protein</keyword>
<keyword id="KW-0694">RNA-binding</keyword>
<keyword id="KW-0699">rRNA-binding</keyword>
<gene>
    <name evidence="1" type="primary">rplY</name>
    <name evidence="1" type="synonym">ctc</name>
    <name type="ordered locus">PTH_0112</name>
</gene>